<organism>
    <name type="scientific">Nitratidesulfovibrio vulgaris (strain ATCC 29579 / DSM 644 / CCUG 34227 / NCIMB 8303 / VKM B-1760 / Hildenborough)</name>
    <name type="common">Desulfovibrio vulgaris</name>
    <dbReference type="NCBI Taxonomy" id="882"/>
    <lineage>
        <taxon>Bacteria</taxon>
        <taxon>Pseudomonadati</taxon>
        <taxon>Thermodesulfobacteriota</taxon>
        <taxon>Desulfovibrionia</taxon>
        <taxon>Desulfovibrionales</taxon>
        <taxon>Desulfovibrionaceae</taxon>
        <taxon>Nitratidesulfovibrio</taxon>
    </lineage>
</organism>
<feature type="chain" id="PRO_0000142419" description="Adenine deaminase">
    <location>
        <begin position="1"/>
        <end position="575"/>
    </location>
</feature>
<evidence type="ECO:0000255" key="1">
    <source>
        <dbReference type="HAMAP-Rule" id="MF_01518"/>
    </source>
</evidence>
<reference key="1">
    <citation type="journal article" date="2004" name="Nat. Biotechnol.">
        <title>The genome sequence of the anaerobic, sulfate-reducing bacterium Desulfovibrio vulgaris Hildenborough.</title>
        <authorList>
            <person name="Heidelberg J.F."/>
            <person name="Seshadri R."/>
            <person name="Haveman S.A."/>
            <person name="Hemme C.L."/>
            <person name="Paulsen I.T."/>
            <person name="Kolonay J.F."/>
            <person name="Eisen J.A."/>
            <person name="Ward N.L."/>
            <person name="Methe B.A."/>
            <person name="Brinkac L.M."/>
            <person name="Daugherty S.C."/>
            <person name="DeBoy R.T."/>
            <person name="Dodson R.J."/>
            <person name="Durkin A.S."/>
            <person name="Madupu R."/>
            <person name="Nelson W.C."/>
            <person name="Sullivan S.A."/>
            <person name="Fouts D.E."/>
            <person name="Haft D.H."/>
            <person name="Selengut J."/>
            <person name="Peterson J.D."/>
            <person name="Davidsen T.M."/>
            <person name="Zafar N."/>
            <person name="Zhou L."/>
            <person name="Radune D."/>
            <person name="Dimitrov G."/>
            <person name="Hance M."/>
            <person name="Tran K."/>
            <person name="Khouri H.M."/>
            <person name="Gill J."/>
            <person name="Utterback T.R."/>
            <person name="Feldblyum T.V."/>
            <person name="Wall J.D."/>
            <person name="Voordouw G."/>
            <person name="Fraser C.M."/>
        </authorList>
    </citation>
    <scope>NUCLEOTIDE SEQUENCE [LARGE SCALE GENOMIC DNA]</scope>
    <source>
        <strain>ATCC 29579 / DSM 644 / CCUG 34227 / NCIMB 8303 / VKM B-1760 / Hildenborough</strain>
    </source>
</reference>
<comment type="catalytic activity">
    <reaction evidence="1">
        <text>adenine + H2O + H(+) = hypoxanthine + NH4(+)</text>
        <dbReference type="Rhea" id="RHEA:23688"/>
        <dbReference type="ChEBI" id="CHEBI:15377"/>
        <dbReference type="ChEBI" id="CHEBI:15378"/>
        <dbReference type="ChEBI" id="CHEBI:16708"/>
        <dbReference type="ChEBI" id="CHEBI:17368"/>
        <dbReference type="ChEBI" id="CHEBI:28938"/>
        <dbReference type="EC" id="3.5.4.2"/>
    </reaction>
</comment>
<comment type="cofactor">
    <cofactor evidence="1">
        <name>Mn(2+)</name>
        <dbReference type="ChEBI" id="CHEBI:29035"/>
    </cofactor>
</comment>
<comment type="interaction">
    <interactant intactId="EBI-10071496">
        <id>Q72EX7</id>
    </interactant>
    <interactant intactId="EBI-10070754">
        <id>Q72EZ0</id>
        <label>DVU_0428</label>
    </interactant>
    <organismsDiffer>false</organismsDiffer>
    <experiments>2</experiments>
</comment>
<comment type="similarity">
    <text evidence="1">Belongs to the metallo-dependent hydrolases superfamily. Adenine deaminase family.</text>
</comment>
<proteinExistence type="evidence at protein level"/>
<gene>
    <name evidence="1" type="primary">ade</name>
    <name type="ordered locus">DVU_0441</name>
</gene>
<keyword id="KW-0378">Hydrolase</keyword>
<keyword id="KW-0464">Manganese</keyword>
<keyword id="KW-1185">Reference proteome</keyword>
<protein>
    <recommendedName>
        <fullName evidence="1">Adenine deaminase</fullName>
        <shortName evidence="1">Adenase</shortName>
        <shortName evidence="1">Adenine aminase</shortName>
        <ecNumber evidence="1">3.5.4.2</ecNumber>
    </recommendedName>
</protein>
<sequence>MTYRPLLNDLVDMAAGRAPVDLVVRNARIVDVFSQRIVEAPLAIGGGRFLGFFEAEAHATLDAEGRYLLPGLIDGHVHIESSLVSPAQFARLVLARGTTAVIADPHEIANVCGLAGLRYMLDATRDLPLDVRLALPSCVPATPFENAGAVLDAAALATLMDDPRVAGLGEMMNFPGVLAGDADVLDKIALALDRGKTVDGHSPGLAGRDLATYAAARIATDHECTTVDEMHERIALGMYVLLREGSAARDMARLAPGITPGNARRCVFCTDDRQPADILRDGHIDNHLRIAVSHGVDPVTAVTIATLNAAECFGLRDRGAVAPGRVADFVLVDDLTGFAVRKVYAAGRLVARDGAVVVDLPDHADPAVRDTVNIRPLDDTAFRLPLPTGLARVIGLQPHSLLTDALERDVPRDASGCFTPGDGLVKLAVVERHKATGNVGVGIIEGYGLRGGAVATTVAHDSHNIVVAGDNDADMLVAVRELERTGGGITLCAGGRVLASLPLPVAGLMSDRPATEVSATFAQMLSIAHETLHISRDIEPFMTLSFLTLPVIPALKLTDRGLFDVRTFSFTTVGV</sequence>
<accession>Q72EX7</accession>
<dbReference type="EC" id="3.5.4.2" evidence="1"/>
<dbReference type="EMBL" id="AE017285">
    <property type="protein sequence ID" value="AAS94924.1"/>
    <property type="molecule type" value="Genomic_DNA"/>
</dbReference>
<dbReference type="RefSeq" id="WP_010937748.1">
    <property type="nucleotide sequence ID" value="NC_002937.3"/>
</dbReference>
<dbReference type="RefSeq" id="YP_009665.1">
    <property type="nucleotide sequence ID" value="NC_002937.3"/>
</dbReference>
<dbReference type="SMR" id="Q72EX7"/>
<dbReference type="IntAct" id="Q72EX7">
    <property type="interactions" value="1"/>
</dbReference>
<dbReference type="STRING" id="882.DVU_0441"/>
<dbReference type="PaxDb" id="882-DVU_0441"/>
<dbReference type="EnsemblBacteria" id="AAS94924">
    <property type="protein sequence ID" value="AAS94924"/>
    <property type="gene ID" value="DVU_0441"/>
</dbReference>
<dbReference type="KEGG" id="dvu:DVU_0441"/>
<dbReference type="PATRIC" id="fig|882.5.peg.419"/>
<dbReference type="eggNOG" id="COG1001">
    <property type="taxonomic scope" value="Bacteria"/>
</dbReference>
<dbReference type="HOGENOM" id="CLU_027935_0_0_7"/>
<dbReference type="OrthoDB" id="9775607at2"/>
<dbReference type="PhylomeDB" id="Q72EX7"/>
<dbReference type="Proteomes" id="UP000002194">
    <property type="component" value="Chromosome"/>
</dbReference>
<dbReference type="GO" id="GO:0000034">
    <property type="term" value="F:adenine deaminase activity"/>
    <property type="evidence" value="ECO:0007669"/>
    <property type="project" value="UniProtKB-UniRule"/>
</dbReference>
<dbReference type="GO" id="GO:0006146">
    <property type="term" value="P:adenine catabolic process"/>
    <property type="evidence" value="ECO:0007669"/>
    <property type="project" value="InterPro"/>
</dbReference>
<dbReference type="CDD" id="cd01295">
    <property type="entry name" value="AdeC"/>
    <property type="match status" value="1"/>
</dbReference>
<dbReference type="Gene3D" id="3.20.20.140">
    <property type="entry name" value="Metal-dependent hydrolases"/>
    <property type="match status" value="1"/>
</dbReference>
<dbReference type="Gene3D" id="2.30.40.10">
    <property type="entry name" value="Urease, subunit C, domain 1"/>
    <property type="match status" value="1"/>
</dbReference>
<dbReference type="HAMAP" id="MF_01518">
    <property type="entry name" value="Adenine_deamin"/>
    <property type="match status" value="1"/>
</dbReference>
<dbReference type="InterPro" id="IPR006679">
    <property type="entry name" value="Adenine_deam"/>
</dbReference>
<dbReference type="InterPro" id="IPR026912">
    <property type="entry name" value="Adenine_deam_C"/>
</dbReference>
<dbReference type="InterPro" id="IPR006680">
    <property type="entry name" value="Amidohydro-rel"/>
</dbReference>
<dbReference type="InterPro" id="IPR011059">
    <property type="entry name" value="Metal-dep_hydrolase_composite"/>
</dbReference>
<dbReference type="InterPro" id="IPR032466">
    <property type="entry name" value="Metal_Hydrolase"/>
</dbReference>
<dbReference type="NCBIfam" id="TIGR01178">
    <property type="entry name" value="ade"/>
    <property type="match status" value="1"/>
</dbReference>
<dbReference type="PANTHER" id="PTHR11113:SF2">
    <property type="entry name" value="ADENINE DEAMINASE"/>
    <property type="match status" value="1"/>
</dbReference>
<dbReference type="PANTHER" id="PTHR11113">
    <property type="entry name" value="N-ACETYLGLUCOSAMINE-6-PHOSPHATE DEACETYLASE"/>
    <property type="match status" value="1"/>
</dbReference>
<dbReference type="Pfam" id="PF13382">
    <property type="entry name" value="Adenine_deam_C"/>
    <property type="match status" value="1"/>
</dbReference>
<dbReference type="Pfam" id="PF01979">
    <property type="entry name" value="Amidohydro_1"/>
    <property type="match status" value="1"/>
</dbReference>
<dbReference type="SUPFAM" id="SSF51338">
    <property type="entry name" value="Composite domain of metallo-dependent hydrolases"/>
    <property type="match status" value="1"/>
</dbReference>
<dbReference type="SUPFAM" id="SSF51556">
    <property type="entry name" value="Metallo-dependent hydrolases"/>
    <property type="match status" value="1"/>
</dbReference>
<name>ADEC_NITV2</name>